<sequence length="282" mass="31883">MRPKANQNHKLKVLLVFLLATLILIFIVRSTLTSSQEHQTPQETRSTRCSGACNKLPRSLAQALIHYSTSVITPQQTLKEIAVSSRVLGKKSPCNFLVFGLGHDSLMWSSLNYGGRTVFLEEDEAWIKQIKRRFPMLESYHVTYDSKVNQADNLIEVGKGPECTAIGDPRYSMCQLALKGLPAEIYETGWDLIMVDAPTGYYDEAPGRMTAIYTAGMMARNRKQGGETDVFVHDVNREIEDKFSKAFLCEGYMKKQEGRLRHFIIPSYRDGSESESNRPFCP</sequence>
<evidence type="ECO:0000255" key="1"/>
<evidence type="ECO:0000269" key="2">
    <source>
    </source>
</evidence>
<evidence type="ECO:0000269" key="3">
    <source>
    </source>
</evidence>
<evidence type="ECO:0000269" key="4">
    <source>
    </source>
</evidence>
<evidence type="ECO:0000305" key="5"/>
<feature type="chain" id="PRO_0000420837" description="Glucuronoxylan 4-O-methyltransferase 1">
    <location>
        <begin position="1"/>
        <end position="282"/>
    </location>
</feature>
<feature type="transmembrane region" description="Helical" evidence="1">
    <location>
        <begin position="13"/>
        <end position="33"/>
    </location>
</feature>
<accession>Q6NMK1</accession>
<accession>O80540</accession>
<dbReference type="EC" id="2.1.1.112"/>
<dbReference type="EMBL" id="JX914594">
    <property type="protein sequence ID" value="AFU91592.1"/>
    <property type="molecule type" value="mRNA"/>
</dbReference>
<dbReference type="EMBL" id="AC003970">
    <property type="protein sequence ID" value="AAC33218.1"/>
    <property type="status" value="ALT_SEQ"/>
    <property type="molecule type" value="Genomic_DNA"/>
</dbReference>
<dbReference type="EMBL" id="CP002684">
    <property type="protein sequence ID" value="AEE28468.1"/>
    <property type="molecule type" value="Genomic_DNA"/>
</dbReference>
<dbReference type="EMBL" id="BT010727">
    <property type="protein sequence ID" value="AAR20784.1"/>
    <property type="molecule type" value="mRNA"/>
</dbReference>
<dbReference type="EMBL" id="BT011658">
    <property type="protein sequence ID" value="AAS47664.1"/>
    <property type="molecule type" value="mRNA"/>
</dbReference>
<dbReference type="FunCoup" id="Q6NMK1">
    <property type="interactions" value="40"/>
</dbReference>
<dbReference type="STRING" id="3702.Q6NMK1"/>
<dbReference type="PaxDb" id="3702-AT1G09610.1"/>
<dbReference type="ProteomicsDB" id="247277"/>
<dbReference type="EnsemblPlants" id="AT1G09610.1">
    <property type="protein sequence ID" value="AT1G09610.1"/>
    <property type="gene ID" value="AT1G09610"/>
</dbReference>
<dbReference type="Gramene" id="AT1G09610.1">
    <property type="protein sequence ID" value="AT1G09610.1"/>
    <property type="gene ID" value="AT1G09610"/>
</dbReference>
<dbReference type="KEGG" id="ath:AT1G09610"/>
<dbReference type="Araport" id="AT1G09610"/>
<dbReference type="TAIR" id="AT1G09610">
    <property type="gene designation" value="GXM1"/>
</dbReference>
<dbReference type="eggNOG" id="ENOG502QST5">
    <property type="taxonomic scope" value="Eukaryota"/>
</dbReference>
<dbReference type="HOGENOM" id="CLU_053427_0_0_1"/>
<dbReference type="InParanoid" id="Q6NMK1"/>
<dbReference type="OMA" id="DESWIEQ"/>
<dbReference type="OrthoDB" id="1896682at2759"/>
<dbReference type="PhylomeDB" id="Q6NMK1"/>
<dbReference type="PRO" id="PR:Q6NMK1"/>
<dbReference type="Proteomes" id="UP000006548">
    <property type="component" value="Chromosome 1"/>
</dbReference>
<dbReference type="ExpressionAtlas" id="Q6NMK1">
    <property type="expression patterns" value="baseline and differential"/>
</dbReference>
<dbReference type="GO" id="GO:0005794">
    <property type="term" value="C:Golgi apparatus"/>
    <property type="evidence" value="ECO:0000314"/>
    <property type="project" value="TAIR"/>
</dbReference>
<dbReference type="GO" id="GO:0000139">
    <property type="term" value="C:Golgi membrane"/>
    <property type="evidence" value="ECO:0007669"/>
    <property type="project" value="UniProtKB-SubCell"/>
</dbReference>
<dbReference type="GO" id="GO:0030775">
    <property type="term" value="F:glucuronoxylan 4-O-methyltransferase activity"/>
    <property type="evidence" value="ECO:0000314"/>
    <property type="project" value="TAIR"/>
</dbReference>
<dbReference type="GO" id="GO:0032259">
    <property type="term" value="P:methylation"/>
    <property type="evidence" value="ECO:0007669"/>
    <property type="project" value="UniProtKB-KW"/>
</dbReference>
<dbReference type="GO" id="GO:0045492">
    <property type="term" value="P:xylan biosynthetic process"/>
    <property type="evidence" value="ECO:0007669"/>
    <property type="project" value="InterPro"/>
</dbReference>
<dbReference type="GO" id="GO:0045491">
    <property type="term" value="P:xylan metabolic process"/>
    <property type="evidence" value="ECO:0000315"/>
    <property type="project" value="TAIR"/>
</dbReference>
<dbReference type="InterPro" id="IPR006514">
    <property type="entry name" value="IRX15/GXM/AGM"/>
</dbReference>
<dbReference type="NCBIfam" id="TIGR01627">
    <property type="entry name" value="A_thal_3515"/>
    <property type="match status" value="1"/>
</dbReference>
<dbReference type="PANTHER" id="PTHR31444">
    <property type="entry name" value="OS11G0490100 PROTEIN"/>
    <property type="match status" value="1"/>
</dbReference>
<dbReference type="Pfam" id="PF21729">
    <property type="entry name" value="IRX15_IRX15L_GXM"/>
    <property type="match status" value="1"/>
</dbReference>
<protein>
    <recommendedName>
        <fullName>Glucuronoxylan 4-O-methyltransferase 1</fullName>
        <ecNumber>2.1.1.112</ecNumber>
    </recommendedName>
</protein>
<gene>
    <name type="primary">GXM1</name>
    <name type="ordered locus">At1g09610</name>
    <name type="ORF">F14J9.26 F14J9.29</name>
</gene>
<reference key="1">
    <citation type="journal article" date="2012" name="Plant Cell Physiol.">
        <title>Three Arabidopsis DUF579 domain-containing GXM proteins are methyltransferases catalyzing 4-O-methylation of glucuronic acid on xylan.</title>
        <authorList>
            <person name="Lee C."/>
            <person name="Teng Q."/>
            <person name="Zhong R."/>
            <person name="Yuan Y."/>
            <person name="Haghighat M."/>
            <person name="Ye Z.H."/>
        </authorList>
    </citation>
    <scope>NUCLEOTIDE SEQUENCE [MRNA]</scope>
    <scope>FUNCTION</scope>
    <scope>CATALYTIC ACTIVITY</scope>
    <scope>TISSUE SPECIFICITY</scope>
    <scope>SUBCELLULAR LOCATION</scope>
    <scope>DISRUPTION PHENOTYPE</scope>
</reference>
<reference key="2">
    <citation type="journal article" date="2000" name="Nature">
        <title>Sequence and analysis of chromosome 1 of the plant Arabidopsis thaliana.</title>
        <authorList>
            <person name="Theologis A."/>
            <person name="Ecker J.R."/>
            <person name="Palm C.J."/>
            <person name="Federspiel N.A."/>
            <person name="Kaul S."/>
            <person name="White O."/>
            <person name="Alonso J."/>
            <person name="Altafi H."/>
            <person name="Araujo R."/>
            <person name="Bowman C.L."/>
            <person name="Brooks S.Y."/>
            <person name="Buehler E."/>
            <person name="Chan A."/>
            <person name="Chao Q."/>
            <person name="Chen H."/>
            <person name="Cheuk R.F."/>
            <person name="Chin C.W."/>
            <person name="Chung M.K."/>
            <person name="Conn L."/>
            <person name="Conway A.B."/>
            <person name="Conway A.R."/>
            <person name="Creasy T.H."/>
            <person name="Dewar K."/>
            <person name="Dunn P."/>
            <person name="Etgu P."/>
            <person name="Feldblyum T.V."/>
            <person name="Feng J.-D."/>
            <person name="Fong B."/>
            <person name="Fujii C.Y."/>
            <person name="Gill J.E."/>
            <person name="Goldsmith A.D."/>
            <person name="Haas B."/>
            <person name="Hansen N.F."/>
            <person name="Hughes B."/>
            <person name="Huizar L."/>
            <person name="Hunter J.L."/>
            <person name="Jenkins J."/>
            <person name="Johnson-Hopson C."/>
            <person name="Khan S."/>
            <person name="Khaykin E."/>
            <person name="Kim C.J."/>
            <person name="Koo H.L."/>
            <person name="Kremenetskaia I."/>
            <person name="Kurtz D.B."/>
            <person name="Kwan A."/>
            <person name="Lam B."/>
            <person name="Langin-Hooper S."/>
            <person name="Lee A."/>
            <person name="Lee J.M."/>
            <person name="Lenz C.A."/>
            <person name="Li J.H."/>
            <person name="Li Y.-P."/>
            <person name="Lin X."/>
            <person name="Liu S.X."/>
            <person name="Liu Z.A."/>
            <person name="Luros J.S."/>
            <person name="Maiti R."/>
            <person name="Marziali A."/>
            <person name="Militscher J."/>
            <person name="Miranda M."/>
            <person name="Nguyen M."/>
            <person name="Nierman W.C."/>
            <person name="Osborne B.I."/>
            <person name="Pai G."/>
            <person name="Peterson J."/>
            <person name="Pham P.K."/>
            <person name="Rizzo M."/>
            <person name="Rooney T."/>
            <person name="Rowley D."/>
            <person name="Sakano H."/>
            <person name="Salzberg S.L."/>
            <person name="Schwartz J.R."/>
            <person name="Shinn P."/>
            <person name="Southwick A.M."/>
            <person name="Sun H."/>
            <person name="Tallon L.J."/>
            <person name="Tambunga G."/>
            <person name="Toriumi M.J."/>
            <person name="Town C.D."/>
            <person name="Utterback T."/>
            <person name="Van Aken S."/>
            <person name="Vaysberg M."/>
            <person name="Vysotskaia V.S."/>
            <person name="Walker M."/>
            <person name="Wu D."/>
            <person name="Yu G."/>
            <person name="Fraser C.M."/>
            <person name="Venter J.C."/>
            <person name="Davis R.W."/>
        </authorList>
    </citation>
    <scope>NUCLEOTIDE SEQUENCE [LARGE SCALE GENOMIC DNA]</scope>
    <source>
        <strain>cv. Columbia</strain>
    </source>
</reference>
<reference key="3">
    <citation type="journal article" date="2017" name="Plant J.">
        <title>Araport11: a complete reannotation of the Arabidopsis thaliana reference genome.</title>
        <authorList>
            <person name="Cheng C.Y."/>
            <person name="Krishnakumar V."/>
            <person name="Chan A.P."/>
            <person name="Thibaud-Nissen F."/>
            <person name="Schobel S."/>
            <person name="Town C.D."/>
        </authorList>
    </citation>
    <scope>GENOME REANNOTATION</scope>
    <source>
        <strain>cv. Columbia</strain>
    </source>
</reference>
<reference key="4">
    <citation type="submission" date="2003-11" db="EMBL/GenBank/DDBJ databases">
        <title>Arabidopsis cDNA clones.</title>
        <authorList>
            <person name="Shinn P."/>
            <person name="Chen H."/>
            <person name="Cheuk R."/>
            <person name="Kim C.J."/>
            <person name="Ecker J.R."/>
        </authorList>
    </citation>
    <scope>NUCLEOTIDE SEQUENCE [LARGE SCALE MRNA]</scope>
</reference>
<reference key="5">
    <citation type="submission" date="2004-02" db="EMBL/GenBank/DDBJ databases">
        <title>Arabidopsis ORF clones.</title>
        <authorList>
            <person name="Kim C.J."/>
            <person name="Chen H."/>
            <person name="Cheuk R."/>
            <person name="Shinn P."/>
            <person name="Ecker J.R."/>
        </authorList>
    </citation>
    <scope>NUCLEOTIDE SEQUENCE [LARGE SCALE MRNA]</scope>
</reference>
<reference key="6">
    <citation type="journal article" date="2011" name="Plant J.">
        <title>The DUF579 domain containing proteins IRX15 and IRX15-L affect xylan synthesis in Arabidopsis.</title>
        <authorList>
            <person name="Jensen J.K."/>
            <person name="Kim H."/>
            <person name="Cocuron J.C."/>
            <person name="Orler R."/>
            <person name="Ralph J."/>
            <person name="Wilkerson C.G."/>
        </authorList>
    </citation>
    <scope>TISSUE SPECIFICITY</scope>
</reference>
<reference key="7">
    <citation type="journal article" date="2011" name="Plant J.">
        <title>Arabidopsis genes IRREGULAR XYLEM (IRX15) and IRX15L encode DUF579-containing proteins that are essential for normal xylan deposition in the secondary cell wall.</title>
        <authorList>
            <person name="Brown D."/>
            <person name="Wightman R."/>
            <person name="Zhang Z."/>
            <person name="Gomez L.D."/>
            <person name="Atanassov I."/>
            <person name="Bukowski J.P."/>
            <person name="Tryfona T."/>
            <person name="McQueen-Mason S.J."/>
            <person name="Dupree P."/>
            <person name="Turner S."/>
        </authorList>
    </citation>
    <scope>DISRUPTION PHENOTYPE</scope>
    <scope>DEVELOPMENTAL STAGE</scope>
</reference>
<comment type="function">
    <text evidence="4">Methyltransferase catalyzing 4-O-methylation of glucuronic acid side chains on xylan.</text>
</comment>
<comment type="catalytic activity">
    <reaction evidence="4">
        <text>glucuronoxylan D-glucuronate + n S-adenosyl-L-methionine = glucuronoxylan 4-O-methyl-D-glucuronate + n S-adenosyl-L-homocysteine + n H(+)</text>
        <dbReference type="Rhea" id="RHEA:20413"/>
        <dbReference type="Rhea" id="RHEA-COMP:14499"/>
        <dbReference type="Rhea" id="RHEA-COMP:14500"/>
        <dbReference type="ChEBI" id="CHEBI:15378"/>
        <dbReference type="ChEBI" id="CHEBI:57856"/>
        <dbReference type="ChEBI" id="CHEBI:59789"/>
        <dbReference type="ChEBI" id="CHEBI:140335"/>
        <dbReference type="ChEBI" id="CHEBI:140336"/>
        <dbReference type="EC" id="2.1.1.112"/>
    </reaction>
</comment>
<comment type="subcellular location">
    <subcellularLocation>
        <location evidence="4">Golgi apparatus membrane</location>
        <topology evidence="4">Single-pass membrane protein</topology>
    </subcellularLocation>
</comment>
<comment type="tissue specificity">
    <text evidence="3 4">Expressed in rosette leaves, stems, flowers and siliques.</text>
</comment>
<comment type="developmental stage">
    <text evidence="2">Up-regulated during secondary cell wall deposition.</text>
</comment>
<comment type="disruption phenotype">
    <text evidence="2 4">No visible phenotype, due to redundancy with GXM2 and GXM3.</text>
</comment>
<comment type="similarity">
    <text evidence="5">Belongs to the methyltransferase superfamily.</text>
</comment>
<comment type="sequence caution" evidence="5">
    <conflict type="erroneous gene model prediction">
        <sequence resource="EMBL-CDS" id="AAC33218"/>
    </conflict>
    <text>The predicted gene At1g09600 has been split into 2 genes: At1g09600 and At1g09610.</text>
</comment>
<proteinExistence type="evidence at protein level"/>
<organism>
    <name type="scientific">Arabidopsis thaliana</name>
    <name type="common">Mouse-ear cress</name>
    <dbReference type="NCBI Taxonomy" id="3702"/>
    <lineage>
        <taxon>Eukaryota</taxon>
        <taxon>Viridiplantae</taxon>
        <taxon>Streptophyta</taxon>
        <taxon>Embryophyta</taxon>
        <taxon>Tracheophyta</taxon>
        <taxon>Spermatophyta</taxon>
        <taxon>Magnoliopsida</taxon>
        <taxon>eudicotyledons</taxon>
        <taxon>Gunneridae</taxon>
        <taxon>Pentapetalae</taxon>
        <taxon>rosids</taxon>
        <taxon>malvids</taxon>
        <taxon>Brassicales</taxon>
        <taxon>Brassicaceae</taxon>
        <taxon>Camelineae</taxon>
        <taxon>Arabidopsis</taxon>
    </lineage>
</organism>
<keyword id="KW-0333">Golgi apparatus</keyword>
<keyword id="KW-0472">Membrane</keyword>
<keyword id="KW-0489">Methyltransferase</keyword>
<keyword id="KW-1185">Reference proteome</keyword>
<keyword id="KW-0949">S-adenosyl-L-methionine</keyword>
<keyword id="KW-0808">Transferase</keyword>
<keyword id="KW-0812">Transmembrane</keyword>
<keyword id="KW-1133">Transmembrane helix</keyword>
<name>GXM1_ARATH</name>